<evidence type="ECO:0000255" key="1">
    <source>
        <dbReference type="HAMAP-Rule" id="MF_00060"/>
    </source>
</evidence>
<evidence type="ECO:0000256" key="2">
    <source>
        <dbReference type="SAM" id="MobiDB-lite"/>
    </source>
</evidence>
<dbReference type="EC" id="3.1.3.5" evidence="1"/>
<dbReference type="EMBL" id="CR936257">
    <property type="protein sequence ID" value="CAI50195.1"/>
    <property type="molecule type" value="Genomic_DNA"/>
</dbReference>
<dbReference type="RefSeq" id="WP_011323811.1">
    <property type="nucleotide sequence ID" value="NC_007426.1"/>
</dbReference>
<dbReference type="SMR" id="Q3INV7"/>
<dbReference type="STRING" id="348780.NP_4208A"/>
<dbReference type="EnsemblBacteria" id="CAI50195">
    <property type="protein sequence ID" value="CAI50195"/>
    <property type="gene ID" value="NP_4208A"/>
</dbReference>
<dbReference type="GeneID" id="3703224"/>
<dbReference type="KEGG" id="nph:NP_4208A"/>
<dbReference type="eggNOG" id="arCOG02303">
    <property type="taxonomic scope" value="Archaea"/>
</dbReference>
<dbReference type="HOGENOM" id="CLU_045192_1_3_2"/>
<dbReference type="OrthoDB" id="26873at2157"/>
<dbReference type="Proteomes" id="UP000002698">
    <property type="component" value="Chromosome"/>
</dbReference>
<dbReference type="GO" id="GO:0005737">
    <property type="term" value="C:cytoplasm"/>
    <property type="evidence" value="ECO:0007669"/>
    <property type="project" value="UniProtKB-SubCell"/>
</dbReference>
<dbReference type="GO" id="GO:0008253">
    <property type="term" value="F:5'-nucleotidase activity"/>
    <property type="evidence" value="ECO:0007669"/>
    <property type="project" value="UniProtKB-UniRule"/>
</dbReference>
<dbReference type="GO" id="GO:0046872">
    <property type="term" value="F:metal ion binding"/>
    <property type="evidence" value="ECO:0007669"/>
    <property type="project" value="UniProtKB-UniRule"/>
</dbReference>
<dbReference type="GO" id="GO:0000166">
    <property type="term" value="F:nucleotide binding"/>
    <property type="evidence" value="ECO:0007669"/>
    <property type="project" value="UniProtKB-KW"/>
</dbReference>
<dbReference type="Gene3D" id="3.40.1210.10">
    <property type="entry name" value="Survival protein SurE-like phosphatase/nucleotidase"/>
    <property type="match status" value="1"/>
</dbReference>
<dbReference type="HAMAP" id="MF_00060">
    <property type="entry name" value="SurE"/>
    <property type="match status" value="1"/>
</dbReference>
<dbReference type="InterPro" id="IPR030048">
    <property type="entry name" value="SurE"/>
</dbReference>
<dbReference type="InterPro" id="IPR002828">
    <property type="entry name" value="SurE-like_Pase/nucleotidase"/>
</dbReference>
<dbReference type="InterPro" id="IPR036523">
    <property type="entry name" value="SurE-like_sf"/>
</dbReference>
<dbReference type="NCBIfam" id="TIGR00087">
    <property type="entry name" value="surE"/>
    <property type="match status" value="1"/>
</dbReference>
<dbReference type="PANTHER" id="PTHR30457">
    <property type="entry name" value="5'-NUCLEOTIDASE SURE"/>
    <property type="match status" value="1"/>
</dbReference>
<dbReference type="PANTHER" id="PTHR30457:SF0">
    <property type="entry name" value="PHOSPHATASE, PUTATIVE (AFU_ORTHOLOGUE AFUA_4G01070)-RELATED"/>
    <property type="match status" value="1"/>
</dbReference>
<dbReference type="Pfam" id="PF01975">
    <property type="entry name" value="SurE"/>
    <property type="match status" value="1"/>
</dbReference>
<dbReference type="SUPFAM" id="SSF64167">
    <property type="entry name" value="SurE-like"/>
    <property type="match status" value="1"/>
</dbReference>
<comment type="function">
    <text evidence="1">Nucleotidase that shows phosphatase activity on nucleoside 5'-monophosphates.</text>
</comment>
<comment type="catalytic activity">
    <reaction evidence="1">
        <text>a ribonucleoside 5'-phosphate + H2O = a ribonucleoside + phosphate</text>
        <dbReference type="Rhea" id="RHEA:12484"/>
        <dbReference type="ChEBI" id="CHEBI:15377"/>
        <dbReference type="ChEBI" id="CHEBI:18254"/>
        <dbReference type="ChEBI" id="CHEBI:43474"/>
        <dbReference type="ChEBI" id="CHEBI:58043"/>
        <dbReference type="EC" id="3.1.3.5"/>
    </reaction>
</comment>
<comment type="cofactor">
    <cofactor evidence="1">
        <name>a divalent metal cation</name>
        <dbReference type="ChEBI" id="CHEBI:60240"/>
    </cofactor>
    <text evidence="1">Binds 1 divalent metal cation per subunit.</text>
</comment>
<comment type="subcellular location">
    <subcellularLocation>
        <location evidence="1">Cytoplasm</location>
    </subcellularLocation>
</comment>
<comment type="similarity">
    <text evidence="1">Belongs to the SurE nucleotidase family.</text>
</comment>
<accession>Q3INV7</accession>
<reference key="1">
    <citation type="journal article" date="2005" name="Genome Res.">
        <title>Living with two extremes: conclusions from the genome sequence of Natronomonas pharaonis.</title>
        <authorList>
            <person name="Falb M."/>
            <person name="Pfeiffer F."/>
            <person name="Palm P."/>
            <person name="Rodewald K."/>
            <person name="Hickmann V."/>
            <person name="Tittor J."/>
            <person name="Oesterhelt D."/>
        </authorList>
    </citation>
    <scope>NUCLEOTIDE SEQUENCE [LARGE SCALE GENOMIC DNA]</scope>
    <source>
        <strain>ATCC 35678 / DSM 2160 / CIP 103997 / JCM 8858 / NBRC 14720 / NCIMB 2260 / Gabara</strain>
    </source>
</reference>
<name>SURE_NATPD</name>
<feature type="chain" id="PRO_0000235680" description="5'-nucleotidase SurE">
    <location>
        <begin position="1"/>
        <end position="257"/>
    </location>
</feature>
<feature type="region of interest" description="Disordered" evidence="2">
    <location>
        <begin position="234"/>
        <end position="257"/>
    </location>
</feature>
<feature type="binding site" evidence="1">
    <location>
        <position position="8"/>
    </location>
    <ligand>
        <name>a divalent metal cation</name>
        <dbReference type="ChEBI" id="CHEBI:60240"/>
    </ligand>
</feature>
<feature type="binding site" evidence="1">
    <location>
        <position position="9"/>
    </location>
    <ligand>
        <name>a divalent metal cation</name>
        <dbReference type="ChEBI" id="CHEBI:60240"/>
    </ligand>
</feature>
<feature type="binding site" evidence="1">
    <location>
        <position position="39"/>
    </location>
    <ligand>
        <name>a divalent metal cation</name>
        <dbReference type="ChEBI" id="CHEBI:60240"/>
    </ligand>
</feature>
<feature type="binding site" evidence="1">
    <location>
        <position position="87"/>
    </location>
    <ligand>
        <name>a divalent metal cation</name>
        <dbReference type="ChEBI" id="CHEBI:60240"/>
    </ligand>
</feature>
<organism>
    <name type="scientific">Natronomonas pharaonis (strain ATCC 35678 / DSM 2160 / CIP 103997 / JCM 8858 / NBRC 14720 / NCIMB 2260 / Gabara)</name>
    <name type="common">Halobacterium pharaonis</name>
    <dbReference type="NCBI Taxonomy" id="348780"/>
    <lineage>
        <taxon>Archaea</taxon>
        <taxon>Methanobacteriati</taxon>
        <taxon>Methanobacteriota</taxon>
        <taxon>Stenosarchaea group</taxon>
        <taxon>Halobacteria</taxon>
        <taxon>Halobacteriales</taxon>
        <taxon>Haloarculaceae</taxon>
        <taxon>Natronomonas</taxon>
    </lineage>
</organism>
<gene>
    <name evidence="1" type="primary">surE</name>
    <name type="ordered locus">NP_4208A</name>
</gene>
<keyword id="KW-0963">Cytoplasm</keyword>
<keyword id="KW-0378">Hydrolase</keyword>
<keyword id="KW-0479">Metal-binding</keyword>
<keyword id="KW-0547">Nucleotide-binding</keyword>
<keyword id="KW-1185">Reference proteome</keyword>
<protein>
    <recommendedName>
        <fullName evidence="1">5'-nucleotidase SurE</fullName>
        <ecNumber evidence="1">3.1.3.5</ecNumber>
    </recommendedName>
    <alternativeName>
        <fullName evidence="1">Nucleoside 5'-monophosphate phosphohydrolase</fullName>
    </alternativeName>
</protein>
<proteinExistence type="inferred from homology"/>
<sequence length="257" mass="26966">MDVLLTNDDGIDAVGIRALYDALAEVADVTAVAPADDQSAVGRQLSRTVELHDHELGYAVEGTPADCVIAGLGALDLDPDIVVAGCNEGANLGEYVLGRSGTVSAAVEAAFFGVPAIAASVYFPAGDVTIEEFDPDKTDFAEASRAVRYLVDNAIGAGVFDAADYLNVNAPLPPETGHAPMEITEPSHVYEMDGERDGETVRIQDHIWERMAEGTIPDPPGTDRRAVVEGRVSVSPLTAPHPTTGHEGLAGLAEKYQ</sequence>